<comment type="function">
    <text evidence="1">Plays a central role in virus morphogenesis and assembly. Acts as a viroporin and self-assembles in host membranes forming pentameric protein-lipid pores that allow ion transport. Also plays a role in the induction of apoptosis.</text>
</comment>
<comment type="subunit">
    <text evidence="1">Homopentamer. Interacts with membrane protein M in the budding compartment of the host cell, which is located between endoplasmic reticulum and the Golgi complex. Interacts with Nucleoprotein.</text>
</comment>
<comment type="subcellular location">
    <subcellularLocation>
        <location evidence="1">Host Golgi apparatus membrane</location>
        <topology evidence="1">Single-pass type III membrane protein</topology>
    </subcellularLocation>
    <text evidence="1">The cytoplasmic tail functions as a Golgi complex-targeting signal.</text>
</comment>
<comment type="miscellaneous">
    <text>Bat coronavirus rp3 is highly similar to SARS-CoV (SARS-like).</text>
</comment>
<comment type="similarity">
    <text evidence="1">Belongs to the betacoronaviruses E protein family.</text>
</comment>
<dbReference type="EMBL" id="DQ071615">
    <property type="protein sequence ID" value="AAZ67054.1"/>
    <property type="molecule type" value="Genomic_RNA"/>
</dbReference>
<dbReference type="SMR" id="Q3I5J3"/>
<dbReference type="Proteomes" id="UP000006570">
    <property type="component" value="Genome"/>
</dbReference>
<dbReference type="GO" id="GO:0044178">
    <property type="term" value="C:host cell Golgi membrane"/>
    <property type="evidence" value="ECO:0007669"/>
    <property type="project" value="UniProtKB-SubCell"/>
</dbReference>
<dbReference type="GO" id="GO:0016020">
    <property type="term" value="C:membrane"/>
    <property type="evidence" value="ECO:0007669"/>
    <property type="project" value="UniProtKB-UniRule"/>
</dbReference>
<dbReference type="GO" id="GO:0140975">
    <property type="term" value="P:disruption of cellular anatomical structure in another organism"/>
    <property type="evidence" value="ECO:0007669"/>
    <property type="project" value="UniProtKB-UniRule"/>
</dbReference>
<dbReference type="GO" id="GO:0046760">
    <property type="term" value="P:viral budding from Golgi membrane"/>
    <property type="evidence" value="ECO:0007669"/>
    <property type="project" value="UniProtKB-UniRule"/>
</dbReference>
<dbReference type="CDD" id="cd21536">
    <property type="entry name" value="SARS-CoV-2_E"/>
    <property type="match status" value="1"/>
</dbReference>
<dbReference type="Gene3D" id="6.10.250.1810">
    <property type="match status" value="1"/>
</dbReference>
<dbReference type="HAMAP" id="MF_04204">
    <property type="entry name" value="BETA_CORONA_E"/>
    <property type="match status" value="1"/>
</dbReference>
<dbReference type="InterPro" id="IPR043506">
    <property type="entry name" value="E_protein_bCoV"/>
</dbReference>
<dbReference type="InterPro" id="IPR003873">
    <property type="entry name" value="E_protein_CoV"/>
</dbReference>
<dbReference type="InterPro" id="IPR044377">
    <property type="entry name" value="E_SARS-CoV-2"/>
</dbReference>
<dbReference type="Pfam" id="PF02723">
    <property type="entry name" value="CoV_E"/>
    <property type="match status" value="1"/>
</dbReference>
<dbReference type="PROSITE" id="PS51926">
    <property type="entry name" value="COV_E"/>
    <property type="match status" value="1"/>
</dbReference>
<reference key="1">
    <citation type="journal article" date="2005" name="Science">
        <title>Bats are natural reservoirs of SARS-like coronaviruses.</title>
        <authorList>
            <person name="Li W."/>
            <person name="Shi Z."/>
            <person name="Yu M."/>
            <person name="Ren W."/>
            <person name="Smith C."/>
            <person name="Epstein J.H."/>
            <person name="Wang H."/>
            <person name="Crameri G."/>
            <person name="Hu Z."/>
            <person name="Zhang H."/>
            <person name="Zhang J."/>
            <person name="McEachern J."/>
            <person name="Field H."/>
            <person name="Daszak P."/>
            <person name="Eaton B.T."/>
            <person name="Zhang S."/>
            <person name="Wang L.F."/>
        </authorList>
    </citation>
    <scope>NUCLEOTIDE SEQUENCE [GENOMIC RNA]</scope>
</reference>
<sequence length="76" mass="8361">MYSFVSEETGTLIVNSVLLFLAFVVFLLVTLAILTALRLCAYCCNIVNVSLVKPTVYVYSRVKNLNSSEGVPDLLV</sequence>
<feature type="chain" id="PRO_0000106073" description="Envelope small membrane protein">
    <location>
        <begin position="1"/>
        <end position="76"/>
    </location>
</feature>
<feature type="topological domain" description="Virion surface" evidence="1">
    <location>
        <begin position="1"/>
        <end position="16"/>
    </location>
</feature>
<feature type="transmembrane region" description="Helical" evidence="1">
    <location>
        <begin position="17"/>
        <end position="37"/>
    </location>
</feature>
<feature type="topological domain" description="Intravirion" evidence="1">
    <location>
        <begin position="38"/>
        <end position="76"/>
    </location>
</feature>
<accession>Q3I5J3</accession>
<name>VEMP_BCRP3</name>
<evidence type="ECO:0000255" key="1">
    <source>
        <dbReference type="HAMAP-Rule" id="MF_04204"/>
    </source>
</evidence>
<gene>
    <name evidence="1" type="primary">E</name>
    <name type="synonym">sM</name>
    <name type="ORF">4</name>
</gene>
<keyword id="KW-0053">Apoptosis</keyword>
<keyword id="KW-1040">Host Golgi apparatus</keyword>
<keyword id="KW-1043">Host membrane</keyword>
<keyword id="KW-0472">Membrane</keyword>
<keyword id="KW-0812">Transmembrane</keyword>
<keyword id="KW-1133">Transmembrane helix</keyword>
<organismHost>
    <name type="scientific">Rhinolophus ferrumequinum</name>
    <name type="common">Greater horseshoe bat</name>
    <dbReference type="NCBI Taxonomy" id="59479"/>
</organismHost>
<organismHost>
    <name type="scientific">Rhinolophus macrotis</name>
    <name type="common">Big-eared horseshoe bat</name>
    <dbReference type="NCBI Taxonomy" id="196889"/>
</organismHost>
<organismHost>
    <name type="scientific">Rhinolophus pearsonii</name>
    <dbReference type="NCBI Taxonomy" id="188571"/>
</organismHost>
<organismHost>
    <name type="scientific">Rhinolophus sinicus</name>
    <name type="common">Chinese rufous horseshoe bat</name>
    <dbReference type="NCBI Taxonomy" id="89399"/>
</organismHost>
<protein>
    <recommendedName>
        <fullName evidence="1">Envelope small membrane protein</fullName>
        <shortName evidence="1">E protein</shortName>
        <shortName evidence="1">sM protein</shortName>
    </recommendedName>
</protein>
<proteinExistence type="inferred from homology"/>
<organism>
    <name type="scientific">Bat coronavirus Rp3/2004</name>
    <name type="common">BtCoV/Rp3/2004</name>
    <name type="synonym">SARS-like coronavirus Rp3</name>
    <dbReference type="NCBI Taxonomy" id="349344"/>
    <lineage>
        <taxon>Viruses</taxon>
        <taxon>Riboviria</taxon>
        <taxon>Orthornavirae</taxon>
        <taxon>Pisuviricota</taxon>
        <taxon>Pisoniviricetes</taxon>
        <taxon>Nidovirales</taxon>
        <taxon>Cornidovirineae</taxon>
        <taxon>Coronaviridae</taxon>
        <taxon>Orthocoronavirinae</taxon>
        <taxon>Betacoronavirus</taxon>
        <taxon>Sarbecovirus</taxon>
        <taxon>Severe acute respiratory syndrome coronavirus</taxon>
    </lineage>
</organism>